<proteinExistence type="evidence at protein level"/>
<comment type="function">
    <text evidence="1 4">NDH-1 shuttles electrons from an unknown electron donor, via FMN and iron-sulfur (Fe-S) centers, to quinones in the respiratory and/or the photosynthetic chain. The immediate electron acceptor for the enzyme in this species is believed to be plastoquinone. Couples the redox reaction to proton translocation, and thus conserves the redox energy in a proton gradient (By similarity). Cyanobacterial NDH-1 also plays a role in inorganic carbon-concentration.</text>
</comment>
<comment type="catalytic activity">
    <reaction>
        <text>a plastoquinone + NADH + (n+1) H(+)(in) = a plastoquinol + NAD(+) + n H(+)(out)</text>
        <dbReference type="Rhea" id="RHEA:42608"/>
        <dbReference type="Rhea" id="RHEA-COMP:9561"/>
        <dbReference type="Rhea" id="RHEA-COMP:9562"/>
        <dbReference type="ChEBI" id="CHEBI:15378"/>
        <dbReference type="ChEBI" id="CHEBI:17757"/>
        <dbReference type="ChEBI" id="CHEBI:57540"/>
        <dbReference type="ChEBI" id="CHEBI:57945"/>
        <dbReference type="ChEBI" id="CHEBI:62192"/>
    </reaction>
</comment>
<comment type="catalytic activity">
    <reaction>
        <text>a plastoquinone + NADPH + (n+1) H(+)(in) = a plastoquinol + NADP(+) + n H(+)(out)</text>
        <dbReference type="Rhea" id="RHEA:42612"/>
        <dbReference type="Rhea" id="RHEA-COMP:9561"/>
        <dbReference type="Rhea" id="RHEA-COMP:9562"/>
        <dbReference type="ChEBI" id="CHEBI:15378"/>
        <dbReference type="ChEBI" id="CHEBI:17757"/>
        <dbReference type="ChEBI" id="CHEBI:57783"/>
        <dbReference type="ChEBI" id="CHEBI:58349"/>
        <dbReference type="ChEBI" id="CHEBI:62192"/>
    </reaction>
</comment>
<comment type="subunit">
    <text evidence="3">NDH-1 can be composed of about 15 different subunits; different subcomplexes with different compositions have been identified which probably have different functions.</text>
</comment>
<comment type="subcellular location">
    <subcellularLocation>
        <location evidence="6">Cellular thylakoid membrane</location>
        <topology evidence="6">Multi-pass membrane protein</topology>
    </subcellularLocation>
</comment>
<comment type="similarity">
    <text evidence="5">Belongs to the complex I NdhL subunit family.</text>
</comment>
<keyword id="KW-0903">Direct protein sequencing</keyword>
<keyword id="KW-0472">Membrane</keyword>
<keyword id="KW-0520">NAD</keyword>
<keyword id="KW-0521">NADP</keyword>
<keyword id="KW-0618">Plastoquinone</keyword>
<keyword id="KW-0874">Quinone</keyword>
<keyword id="KW-1185">Reference proteome</keyword>
<keyword id="KW-0793">Thylakoid</keyword>
<keyword id="KW-1278">Translocase</keyword>
<keyword id="KW-0812">Transmembrane</keyword>
<keyword id="KW-1133">Transmembrane helix</keyword>
<keyword id="KW-0813">Transport</keyword>
<gene>
    <name type="primary">ndhL</name>
    <name type="synonym">ictA</name>
    <name type="ordered locus">ssr1386</name>
</gene>
<protein>
    <recommendedName>
        <fullName>NAD(P)H-quinone oxidoreductase subunit L</fullName>
        <ecNumber>7.1.1.-</ecNumber>
    </recommendedName>
    <alternativeName>
        <fullName>Inorganic carbon transport protein</fullName>
    </alternativeName>
    <alternativeName>
        <fullName>NAD(P)H dehydrogenase I subunit L</fullName>
    </alternativeName>
    <alternativeName>
        <fullName>NDH-1 subunit L</fullName>
    </alternativeName>
    <alternativeName>
        <fullName>NDH-L</fullName>
    </alternativeName>
</protein>
<evidence type="ECO:0000250" key="1"/>
<evidence type="ECO:0000255" key="2"/>
<evidence type="ECO:0000269" key="3">
    <source>
    </source>
</evidence>
<evidence type="ECO:0000269" key="4">
    <source>
    </source>
</evidence>
<evidence type="ECO:0000305" key="5"/>
<evidence type="ECO:0000305" key="6">
    <source>
    </source>
</evidence>
<reference key="1">
    <citation type="journal article" date="1991" name="Plant Physiol.">
        <title>Cloning and inactivation of a gene essential to inorganic carbon transport of Synechocystis PCC6803.</title>
        <authorList>
            <person name="Ogawa T."/>
        </authorList>
    </citation>
    <scope>NUCLEOTIDE SEQUENCE [GENOMIC DNA]</scope>
    <scope>FUNCTION IN INORGANIC CARBON TRANSPORT</scope>
</reference>
<reference key="2">
    <citation type="journal article" date="1996" name="DNA Res.">
        <title>Sequence analysis of the genome of the unicellular cyanobacterium Synechocystis sp. strain PCC6803. II. Sequence determination of the entire genome and assignment of potential protein-coding regions.</title>
        <authorList>
            <person name="Kaneko T."/>
            <person name="Sato S."/>
            <person name="Kotani H."/>
            <person name="Tanaka A."/>
            <person name="Asamizu E."/>
            <person name="Nakamura Y."/>
            <person name="Miyajima N."/>
            <person name="Hirosawa M."/>
            <person name="Sugiura M."/>
            <person name="Sasamoto S."/>
            <person name="Kimura T."/>
            <person name="Hosouchi T."/>
            <person name="Matsuno A."/>
            <person name="Muraki A."/>
            <person name="Nakazaki N."/>
            <person name="Naruo K."/>
            <person name="Okumura S."/>
            <person name="Shimpo S."/>
            <person name="Takeuchi C."/>
            <person name="Wada T."/>
            <person name="Watanabe A."/>
            <person name="Yamada M."/>
            <person name="Yasuda M."/>
            <person name="Tabata S."/>
        </authorList>
    </citation>
    <scope>NUCLEOTIDE SEQUENCE [LARGE SCALE GENOMIC DNA]</scope>
    <source>
        <strain>ATCC 27184 / PCC 6803 / Kazusa</strain>
    </source>
</reference>
<reference key="3">
    <citation type="journal article" date="2005" name="J. Biol. Chem.">
        <title>Identification of NdhL and Ssl1690 (NdhO) in NDH-1L and NDH-1M complexes of Synechocystis sp. PCC 6803.</title>
        <authorList>
            <person name="Battchikova N."/>
            <person name="Zhang P."/>
            <person name="Rudd S."/>
            <person name="Ogawa T."/>
            <person name="Aro E.-M."/>
        </authorList>
    </citation>
    <scope>PROTEIN SEQUENCE OF 42-50</scope>
    <scope>SUBUNIT</scope>
</reference>
<reference key="4">
    <citation type="journal article" date="1992" name="Plant Physiol.">
        <title>Identification and characterization of the ictA/ndhL gene product essential to inorganic carbon transport of Synechocystis PCC6803.</title>
        <authorList>
            <person name="Ogawa T."/>
        </authorList>
    </citation>
    <scope>CHARACTERIZATION AS A MEMBER OF THE NAD(P)H-QUINONE OXIDOREDUCTASE COMPLEX</scope>
    <scope>SUBCELLULAR LOCATION</scope>
</reference>
<feature type="chain" id="PRO_0000084150" description="NAD(P)H-quinone oxidoreductase subunit L">
    <location>
        <begin position="1"/>
        <end position="80"/>
    </location>
</feature>
<feature type="transmembrane region" description="Helical" evidence="2">
    <location>
        <begin position="14"/>
        <end position="34"/>
    </location>
</feature>
<feature type="transmembrane region" description="Helical" evidence="2">
    <location>
        <begin position="51"/>
        <end position="71"/>
    </location>
</feature>
<organism>
    <name type="scientific">Synechocystis sp. (strain ATCC 27184 / PCC 6803 / Kazusa)</name>
    <dbReference type="NCBI Taxonomy" id="1111708"/>
    <lineage>
        <taxon>Bacteria</taxon>
        <taxon>Bacillati</taxon>
        <taxon>Cyanobacteriota</taxon>
        <taxon>Cyanophyceae</taxon>
        <taxon>Synechococcales</taxon>
        <taxon>Merismopediaceae</taxon>
        <taxon>Synechocystis</taxon>
    </lineage>
</organism>
<accession>P27372</accession>
<dbReference type="EC" id="7.1.1.-"/>
<dbReference type="EMBL" id="M73833">
    <property type="protein sequence ID" value="AAA27290.1"/>
    <property type="molecule type" value="Genomic_DNA"/>
</dbReference>
<dbReference type="EMBL" id="BA000022">
    <property type="protein sequence ID" value="BAA18123.1"/>
    <property type="molecule type" value="Genomic_DNA"/>
</dbReference>
<dbReference type="PIR" id="JQ1959">
    <property type="entry name" value="JQ1959"/>
</dbReference>
<dbReference type="SMR" id="P27372"/>
<dbReference type="IntAct" id="P27372">
    <property type="interactions" value="7"/>
</dbReference>
<dbReference type="STRING" id="1148.gene:10498994"/>
<dbReference type="PaxDb" id="1148-1653207"/>
<dbReference type="EnsemblBacteria" id="BAA18123">
    <property type="protein sequence ID" value="BAA18123"/>
    <property type="gene ID" value="BAA18123"/>
</dbReference>
<dbReference type="KEGG" id="syn:ssr1386"/>
<dbReference type="eggNOG" id="ENOG5032ZM4">
    <property type="taxonomic scope" value="Bacteria"/>
</dbReference>
<dbReference type="InParanoid" id="P27372"/>
<dbReference type="Proteomes" id="UP000001425">
    <property type="component" value="Chromosome"/>
</dbReference>
<dbReference type="GO" id="GO:0031676">
    <property type="term" value="C:plasma membrane-derived thylakoid membrane"/>
    <property type="evidence" value="ECO:0007669"/>
    <property type="project" value="UniProtKB-SubCell"/>
</dbReference>
<dbReference type="GO" id="GO:0016655">
    <property type="term" value="F:oxidoreductase activity, acting on NAD(P)H, quinone or similar compound as acceptor"/>
    <property type="evidence" value="ECO:0007669"/>
    <property type="project" value="UniProtKB-UniRule"/>
</dbReference>
<dbReference type="GO" id="GO:0048038">
    <property type="term" value="F:quinone binding"/>
    <property type="evidence" value="ECO:0007669"/>
    <property type="project" value="UniProtKB-KW"/>
</dbReference>
<dbReference type="HAMAP" id="MF_01355">
    <property type="entry name" value="NDH1_NDH1L"/>
    <property type="match status" value="1"/>
</dbReference>
<dbReference type="InterPro" id="IPR019654">
    <property type="entry name" value="NADH-quinone_OxRdatse_su_L"/>
</dbReference>
<dbReference type="PANTHER" id="PTHR36727">
    <property type="entry name" value="NAD(P)H-QUINONE OXIDOREDUCTASE SUBUNIT L, CHLOROPLASTIC"/>
    <property type="match status" value="1"/>
</dbReference>
<dbReference type="PANTHER" id="PTHR36727:SF2">
    <property type="entry name" value="NAD(P)H-QUINONE OXIDOREDUCTASE SUBUNIT L, CHLOROPLASTIC"/>
    <property type="match status" value="1"/>
</dbReference>
<dbReference type="Pfam" id="PF10716">
    <property type="entry name" value="NdhL"/>
    <property type="match status" value="1"/>
</dbReference>
<sequence length="80" mass="9252">MEDLLGLLLSETGLLAIIYLGLSLAYLLVFPALLYWYLQKRWYVASSVERLVMYFLVFLFFPGLLVLSPVLNLRPRRQAA</sequence>
<name>NDHL_SYNY3</name>